<comment type="function">
    <text evidence="3 4">Involved in a multicomponent binding-protein-dependent transport system for glycine betaine; probably responsible for the translocation of the substrate across the membrane.</text>
</comment>
<comment type="subunit">
    <text evidence="3">The complex is composed of two ATP-binding proteins (OpuAA), two transmembrane proteins (OpuAB) and a solute-binding protein (OpuAC).</text>
</comment>
<comment type="subcellular location">
    <subcellularLocation>
        <location>Cell membrane</location>
        <topology>Multi-pass membrane protein</topology>
    </subcellularLocation>
</comment>
<comment type="similarity">
    <text evidence="5">Belongs to the binding-protein-dependent transport system permease family. CysTW subfamily.</text>
</comment>
<gene>
    <name type="primary">opuAB</name>
    <name type="ordered locus">BSU02990</name>
</gene>
<feature type="chain" id="PRO_0000060153" description="Glycine betaine transport system permease protein OpuAB">
    <location>
        <begin position="1"/>
        <end position="282"/>
    </location>
</feature>
<feature type="topological domain" description="Extracellular" evidence="1">
    <location>
        <begin position="1"/>
        <end position="18"/>
    </location>
</feature>
<feature type="transmembrane region" description="Helical" evidence="2">
    <location>
        <begin position="19"/>
        <end position="39"/>
    </location>
</feature>
<feature type="topological domain" description="Cytoplasmic" evidence="1">
    <location>
        <begin position="40"/>
        <end position="44"/>
    </location>
</feature>
<feature type="transmembrane region" description="Helical" evidence="2">
    <location>
        <begin position="45"/>
        <end position="65"/>
    </location>
</feature>
<feature type="topological domain" description="Extracellular" evidence="1">
    <location>
        <begin position="66"/>
        <end position="69"/>
    </location>
</feature>
<feature type="transmembrane region" description="Helical" evidence="2">
    <location>
        <begin position="70"/>
        <end position="90"/>
    </location>
</feature>
<feature type="topological domain" description="Cytoplasmic" evidence="1">
    <location>
        <begin position="91"/>
        <end position="93"/>
    </location>
</feature>
<feature type="transmembrane region" description="Helical" evidence="2">
    <location>
        <begin position="94"/>
        <end position="114"/>
    </location>
</feature>
<feature type="topological domain" description="Extracellular" evidence="1">
    <location>
        <begin position="115"/>
        <end position="137"/>
    </location>
</feature>
<feature type="transmembrane region" description="Helical" evidence="2">
    <location>
        <begin position="138"/>
        <end position="158"/>
    </location>
</feature>
<feature type="topological domain" description="Cytoplasmic" evidence="1">
    <location>
        <begin position="159"/>
        <end position="215"/>
    </location>
</feature>
<feature type="transmembrane region" description="Helical" evidence="2">
    <location>
        <begin position="216"/>
        <end position="236"/>
    </location>
</feature>
<feature type="topological domain" description="Extracellular" evidence="1">
    <location>
        <begin position="237"/>
        <end position="242"/>
    </location>
</feature>
<feature type="transmembrane region" description="Helical" evidence="2">
    <location>
        <begin position="243"/>
        <end position="263"/>
    </location>
</feature>
<feature type="topological domain" description="Cytoplasmic" evidence="1">
    <location>
        <begin position="264"/>
        <end position="282"/>
    </location>
</feature>
<feature type="domain" description="ABC transmembrane type-1" evidence="2">
    <location>
        <begin position="90"/>
        <end position="269"/>
    </location>
</feature>
<sequence length="282" mass="30247">MDRLPRIPLADIIDRFVDWITMTFGGFFDGIANGLAAFVNGIVTGLGFIPSILLTIIFAALAWWISTRGIALFTLIGFLLIDYLGYWDPMLQTLALVLTSVIISIVVGVPIGIWASQKETVRRIVTPILDLMQTMPAFVYLLPAIFFFNIGVVPGVVASVIFAMPPTIRMTVLGIKQVPADLIEATEAFGSTTAQRLFKVQLPLATKTILAGINQSIMLALSMVVIAAMVGAPGLGSEVYSAVTQLKTGVGVEAGIAIVIVAITLDRITQNIKVKKKSRGNA</sequence>
<keyword id="KW-0029">Amino-acid transport</keyword>
<keyword id="KW-1003">Cell membrane</keyword>
<keyword id="KW-0472">Membrane</keyword>
<keyword id="KW-1185">Reference proteome</keyword>
<keyword id="KW-0812">Transmembrane</keyword>
<keyword id="KW-1133">Transmembrane helix</keyword>
<keyword id="KW-0813">Transport</keyword>
<accession>P46921</accession>
<evidence type="ECO:0000255" key="1"/>
<evidence type="ECO:0000255" key="2">
    <source>
        <dbReference type="PROSITE-ProRule" id="PRU00441"/>
    </source>
</evidence>
<evidence type="ECO:0000269" key="3">
    <source>
    </source>
</evidence>
<evidence type="ECO:0000269" key="4">
    <source>
    </source>
</evidence>
<evidence type="ECO:0000305" key="5"/>
<name>OPUAB_BACSU</name>
<organism>
    <name type="scientific">Bacillus subtilis (strain 168)</name>
    <dbReference type="NCBI Taxonomy" id="224308"/>
    <lineage>
        <taxon>Bacteria</taxon>
        <taxon>Bacillati</taxon>
        <taxon>Bacillota</taxon>
        <taxon>Bacilli</taxon>
        <taxon>Bacillales</taxon>
        <taxon>Bacillaceae</taxon>
        <taxon>Bacillus</taxon>
    </lineage>
</organism>
<proteinExistence type="evidence at protein level"/>
<protein>
    <recommendedName>
        <fullName>Glycine betaine transport system permease protein OpuAB</fullName>
    </recommendedName>
</protein>
<reference key="1">
    <citation type="journal article" date="1995" name="J. Biol. Chem.">
        <title>OpuA, an osmotically regulated binding protein-dependent transport system for the osmoprotectant glycine betaine in Bacillus subtilis.</title>
        <authorList>
            <person name="Kempf B."/>
            <person name="Bremer E."/>
        </authorList>
    </citation>
    <scope>NUCLEOTIDE SEQUENCE [GENOMIC DNA]</scope>
    <scope>FUNCTION</scope>
    <scope>SUBUNIT</scope>
    <source>
        <strain>168 / JH642</strain>
    </source>
</reference>
<reference key="2">
    <citation type="journal article" date="1996" name="Microbiology">
        <title>The 25 degrees-36 degrees region of the Bacillus subtilis chromosome: determination of the sequence of a 146 kb segment and identification of 113 genes.</title>
        <authorList>
            <person name="Yamane K."/>
            <person name="Kumano M."/>
            <person name="Kurita K."/>
        </authorList>
    </citation>
    <scope>NUCLEOTIDE SEQUENCE [GENOMIC DNA]</scope>
    <source>
        <strain>168</strain>
    </source>
</reference>
<reference key="3">
    <citation type="journal article" date="1997" name="Nature">
        <title>The complete genome sequence of the Gram-positive bacterium Bacillus subtilis.</title>
        <authorList>
            <person name="Kunst F."/>
            <person name="Ogasawara N."/>
            <person name="Moszer I."/>
            <person name="Albertini A.M."/>
            <person name="Alloni G."/>
            <person name="Azevedo V."/>
            <person name="Bertero M.G."/>
            <person name="Bessieres P."/>
            <person name="Bolotin A."/>
            <person name="Borchert S."/>
            <person name="Borriss R."/>
            <person name="Boursier L."/>
            <person name="Brans A."/>
            <person name="Braun M."/>
            <person name="Brignell S.C."/>
            <person name="Bron S."/>
            <person name="Brouillet S."/>
            <person name="Bruschi C.V."/>
            <person name="Caldwell B."/>
            <person name="Capuano V."/>
            <person name="Carter N.M."/>
            <person name="Choi S.-K."/>
            <person name="Codani J.-J."/>
            <person name="Connerton I.F."/>
            <person name="Cummings N.J."/>
            <person name="Daniel R.A."/>
            <person name="Denizot F."/>
            <person name="Devine K.M."/>
            <person name="Duesterhoeft A."/>
            <person name="Ehrlich S.D."/>
            <person name="Emmerson P.T."/>
            <person name="Entian K.-D."/>
            <person name="Errington J."/>
            <person name="Fabret C."/>
            <person name="Ferrari E."/>
            <person name="Foulger D."/>
            <person name="Fritz C."/>
            <person name="Fujita M."/>
            <person name="Fujita Y."/>
            <person name="Fuma S."/>
            <person name="Galizzi A."/>
            <person name="Galleron N."/>
            <person name="Ghim S.-Y."/>
            <person name="Glaser P."/>
            <person name="Goffeau A."/>
            <person name="Golightly E.J."/>
            <person name="Grandi G."/>
            <person name="Guiseppi G."/>
            <person name="Guy B.J."/>
            <person name="Haga K."/>
            <person name="Haiech J."/>
            <person name="Harwood C.R."/>
            <person name="Henaut A."/>
            <person name="Hilbert H."/>
            <person name="Holsappel S."/>
            <person name="Hosono S."/>
            <person name="Hullo M.-F."/>
            <person name="Itaya M."/>
            <person name="Jones L.-M."/>
            <person name="Joris B."/>
            <person name="Karamata D."/>
            <person name="Kasahara Y."/>
            <person name="Klaerr-Blanchard M."/>
            <person name="Klein C."/>
            <person name="Kobayashi Y."/>
            <person name="Koetter P."/>
            <person name="Koningstein G."/>
            <person name="Krogh S."/>
            <person name="Kumano M."/>
            <person name="Kurita K."/>
            <person name="Lapidus A."/>
            <person name="Lardinois S."/>
            <person name="Lauber J."/>
            <person name="Lazarevic V."/>
            <person name="Lee S.-M."/>
            <person name="Levine A."/>
            <person name="Liu H."/>
            <person name="Masuda S."/>
            <person name="Mauel C."/>
            <person name="Medigue C."/>
            <person name="Medina N."/>
            <person name="Mellado R.P."/>
            <person name="Mizuno M."/>
            <person name="Moestl D."/>
            <person name="Nakai S."/>
            <person name="Noback M."/>
            <person name="Noone D."/>
            <person name="O'Reilly M."/>
            <person name="Ogawa K."/>
            <person name="Ogiwara A."/>
            <person name="Oudega B."/>
            <person name="Park S.-H."/>
            <person name="Parro V."/>
            <person name="Pohl T.M."/>
            <person name="Portetelle D."/>
            <person name="Porwollik S."/>
            <person name="Prescott A.M."/>
            <person name="Presecan E."/>
            <person name="Pujic P."/>
            <person name="Purnelle B."/>
            <person name="Rapoport G."/>
            <person name="Rey M."/>
            <person name="Reynolds S."/>
            <person name="Rieger M."/>
            <person name="Rivolta C."/>
            <person name="Rocha E."/>
            <person name="Roche B."/>
            <person name="Rose M."/>
            <person name="Sadaie Y."/>
            <person name="Sato T."/>
            <person name="Scanlan E."/>
            <person name="Schleich S."/>
            <person name="Schroeter R."/>
            <person name="Scoffone F."/>
            <person name="Sekiguchi J."/>
            <person name="Sekowska A."/>
            <person name="Seror S.J."/>
            <person name="Serror P."/>
            <person name="Shin B.-S."/>
            <person name="Soldo B."/>
            <person name="Sorokin A."/>
            <person name="Tacconi E."/>
            <person name="Takagi T."/>
            <person name="Takahashi H."/>
            <person name="Takemaru K."/>
            <person name="Takeuchi M."/>
            <person name="Tamakoshi A."/>
            <person name="Tanaka T."/>
            <person name="Terpstra P."/>
            <person name="Tognoni A."/>
            <person name="Tosato V."/>
            <person name="Uchiyama S."/>
            <person name="Vandenbol M."/>
            <person name="Vannier F."/>
            <person name="Vassarotti A."/>
            <person name="Viari A."/>
            <person name="Wambutt R."/>
            <person name="Wedler E."/>
            <person name="Wedler H."/>
            <person name="Weitzenegger T."/>
            <person name="Winters P."/>
            <person name="Wipat A."/>
            <person name="Yamamoto H."/>
            <person name="Yamane K."/>
            <person name="Yasumoto K."/>
            <person name="Yata K."/>
            <person name="Yoshida K."/>
            <person name="Yoshikawa H.-F."/>
            <person name="Zumstein E."/>
            <person name="Yoshikawa H."/>
            <person name="Danchin A."/>
        </authorList>
    </citation>
    <scope>NUCLEOTIDE SEQUENCE [LARGE SCALE GENOMIC DNA]</scope>
    <source>
        <strain>168</strain>
    </source>
</reference>
<reference key="4">
    <citation type="journal article" date="1996" name="J. Bacteriol.">
        <title>Three transport systems for the osmoprotectant glycine betaine operate in Bacillus subtilis: characterization of OpuD.</title>
        <authorList>
            <person name="Kappes R."/>
            <person name="Kempf B."/>
            <person name="Bremer E."/>
        </authorList>
    </citation>
    <scope>FUNCTION IN GLYCINE BETAINE TRANSPORT</scope>
    <source>
        <strain>168 / JH642</strain>
    </source>
</reference>
<dbReference type="EMBL" id="U17292">
    <property type="protein sequence ID" value="AAC43456.1"/>
    <property type="molecule type" value="Genomic_DNA"/>
</dbReference>
<dbReference type="EMBL" id="D50453">
    <property type="protein sequence ID" value="BAA08933.1"/>
    <property type="molecule type" value="Genomic_DNA"/>
</dbReference>
<dbReference type="EMBL" id="AL009126">
    <property type="protein sequence ID" value="CAB12093.1"/>
    <property type="molecule type" value="Genomic_DNA"/>
</dbReference>
<dbReference type="PIR" id="I40536">
    <property type="entry name" value="I40536"/>
</dbReference>
<dbReference type="RefSeq" id="NP_388181.1">
    <property type="nucleotide sequence ID" value="NC_000964.3"/>
</dbReference>
<dbReference type="RefSeq" id="WP_003234703.1">
    <property type="nucleotide sequence ID" value="NZ_OZ025638.1"/>
</dbReference>
<dbReference type="SMR" id="P46921"/>
<dbReference type="FunCoup" id="P46921">
    <property type="interactions" value="180"/>
</dbReference>
<dbReference type="STRING" id="224308.BSU02990"/>
<dbReference type="TCDB" id="3.A.1.12.2">
    <property type="family name" value="the atp-binding cassette (abc) superfamily"/>
</dbReference>
<dbReference type="PaxDb" id="224308-BSU02990"/>
<dbReference type="EnsemblBacteria" id="CAB12093">
    <property type="protein sequence ID" value="CAB12093"/>
    <property type="gene ID" value="BSU_02990"/>
</dbReference>
<dbReference type="GeneID" id="938360"/>
<dbReference type="KEGG" id="bsu:BSU02990"/>
<dbReference type="PATRIC" id="fig|224308.179.peg.311"/>
<dbReference type="eggNOG" id="COG4176">
    <property type="taxonomic scope" value="Bacteria"/>
</dbReference>
<dbReference type="InParanoid" id="P46921"/>
<dbReference type="OrthoDB" id="9801163at2"/>
<dbReference type="PhylomeDB" id="P46921"/>
<dbReference type="BioCyc" id="BSUB:BSU02990-MONOMER"/>
<dbReference type="BRENDA" id="7.6.2.9">
    <property type="organism ID" value="658"/>
</dbReference>
<dbReference type="Proteomes" id="UP000001570">
    <property type="component" value="Chromosome"/>
</dbReference>
<dbReference type="GO" id="GO:0043190">
    <property type="term" value="C:ATP-binding cassette (ABC) transporter complex"/>
    <property type="evidence" value="ECO:0000318"/>
    <property type="project" value="GO_Central"/>
</dbReference>
<dbReference type="GO" id="GO:0005275">
    <property type="term" value="F:amine transmembrane transporter activity"/>
    <property type="evidence" value="ECO:0000318"/>
    <property type="project" value="GO_Central"/>
</dbReference>
<dbReference type="GO" id="GO:0015226">
    <property type="term" value="F:carnitine transmembrane transporter activity"/>
    <property type="evidence" value="ECO:0000318"/>
    <property type="project" value="GO_Central"/>
</dbReference>
<dbReference type="GO" id="GO:0006865">
    <property type="term" value="P:amino acid transport"/>
    <property type="evidence" value="ECO:0007669"/>
    <property type="project" value="UniProtKB-KW"/>
</dbReference>
<dbReference type="GO" id="GO:1902603">
    <property type="term" value="P:carnitine transmembrane transport"/>
    <property type="evidence" value="ECO:0000318"/>
    <property type="project" value="GO_Central"/>
</dbReference>
<dbReference type="GO" id="GO:0015871">
    <property type="term" value="P:choline transport"/>
    <property type="evidence" value="ECO:0000318"/>
    <property type="project" value="GO_Central"/>
</dbReference>
<dbReference type="GO" id="GO:0031460">
    <property type="term" value="P:glycine betaine transport"/>
    <property type="evidence" value="ECO:0000318"/>
    <property type="project" value="GO_Central"/>
</dbReference>
<dbReference type="CDD" id="cd06261">
    <property type="entry name" value="TM_PBP2"/>
    <property type="match status" value="1"/>
</dbReference>
<dbReference type="FunFam" id="1.10.3720.10:FF:000001">
    <property type="entry name" value="Glycine betaine ABC transporter, permease"/>
    <property type="match status" value="1"/>
</dbReference>
<dbReference type="Gene3D" id="1.10.3720.10">
    <property type="entry name" value="MetI-like"/>
    <property type="match status" value="1"/>
</dbReference>
<dbReference type="InterPro" id="IPR000515">
    <property type="entry name" value="MetI-like"/>
</dbReference>
<dbReference type="InterPro" id="IPR035906">
    <property type="entry name" value="MetI-like_sf"/>
</dbReference>
<dbReference type="PANTHER" id="PTHR47737">
    <property type="entry name" value="GLYCINE BETAINE/PROLINE BETAINE TRANSPORT SYSTEM PERMEASE PROTEIN PROW"/>
    <property type="match status" value="1"/>
</dbReference>
<dbReference type="PANTHER" id="PTHR47737:SF1">
    <property type="entry name" value="GLYCINE BETAINE_PROLINE BETAINE TRANSPORT SYSTEM PERMEASE PROTEIN PROW"/>
    <property type="match status" value="1"/>
</dbReference>
<dbReference type="Pfam" id="PF00528">
    <property type="entry name" value="BPD_transp_1"/>
    <property type="match status" value="1"/>
</dbReference>
<dbReference type="SUPFAM" id="SSF161098">
    <property type="entry name" value="MetI-like"/>
    <property type="match status" value="1"/>
</dbReference>
<dbReference type="PROSITE" id="PS50928">
    <property type="entry name" value="ABC_TM1"/>
    <property type="match status" value="1"/>
</dbReference>